<keyword id="KW-0106">Calcium</keyword>
<keyword id="KW-1015">Disulfide bond</keyword>
<keyword id="KW-0378">Hydrolase</keyword>
<keyword id="KW-0442">Lipid degradation</keyword>
<keyword id="KW-0443">Lipid metabolism</keyword>
<keyword id="KW-0479">Metal-binding</keyword>
<keyword id="KW-0528">Neurotoxin</keyword>
<keyword id="KW-0638">Presynaptic neurotoxin</keyword>
<keyword id="KW-0964">Secreted</keyword>
<keyword id="KW-0732">Signal</keyword>
<keyword id="KW-0800">Toxin</keyword>
<sequence length="147" mass="16120">MYPAHLLVLSAVCVSLLGAANIPPYPLNLINFMEMIRYTIPCDKTWGHYADYGCYCGAGGSGTPVDALDRCCYVHDNCYGVAENKHKCNPKTQSCSYKLTKRTIICYGAAGTCGRIVCDCDRTAALCFGDSEYIGAHKNIDTKRHCQ</sequence>
<protein>
    <recommendedName>
        <fullName>Basic phospholipase A2 beta-bungarotoxin A2 chain</fullName>
        <shortName>Beta-BuTX A2 chain</shortName>
        <shortName>svPLA2</shortName>
        <ecNumber>3.1.1.4</ecNumber>
    </recommendedName>
    <alternativeName>
        <fullName>Phosphatidylcholine 2-acylhydrolase</fullName>
    </alternativeName>
</protein>
<comment type="function">
    <text evidence="1">Snake venom phospholipase A2 (PLA2) that inhibits neuromuscular transmission by blocking acetylcholine release from the nerve termini. PLA2 catalyzes the calcium-dependent hydrolysis of the 2-acyl groups in 3-sn-phosphoglycerides (By similarity).</text>
</comment>
<comment type="catalytic activity">
    <reaction evidence="5 6">
        <text>a 1,2-diacyl-sn-glycero-3-phosphocholine + H2O = a 1-acyl-sn-glycero-3-phosphocholine + a fatty acid + H(+)</text>
        <dbReference type="Rhea" id="RHEA:15801"/>
        <dbReference type="ChEBI" id="CHEBI:15377"/>
        <dbReference type="ChEBI" id="CHEBI:15378"/>
        <dbReference type="ChEBI" id="CHEBI:28868"/>
        <dbReference type="ChEBI" id="CHEBI:57643"/>
        <dbReference type="ChEBI" id="CHEBI:58168"/>
        <dbReference type="EC" id="3.1.1.4"/>
    </reaction>
</comment>
<comment type="cofactor">
    <cofactor evidence="2">
        <name>Ca(2+)</name>
        <dbReference type="ChEBI" id="CHEBI:29108"/>
    </cofactor>
    <text evidence="2">Binds 1 Ca(2+) ion.</text>
</comment>
<comment type="subunit">
    <text evidence="2">Heterodimer; disulfide-linked. The A chains have phospholipase A2 activity and the B chains show homology with the basic protease inhibitors.</text>
</comment>
<comment type="subcellular location">
    <subcellularLocation>
        <location evidence="8">Secreted</location>
    </subcellularLocation>
</comment>
<comment type="tissue specificity">
    <text evidence="8">Expressed by the venom gland.</text>
</comment>
<comment type="similarity">
    <text evidence="7">Belongs to the phospholipase A2 family. Group I subfamily. D49 sub-subfamily.</text>
</comment>
<organism>
    <name type="scientific">Bungarus caeruleus</name>
    <name type="common">Indian krait</name>
    <dbReference type="NCBI Taxonomy" id="132961"/>
    <lineage>
        <taxon>Eukaryota</taxon>
        <taxon>Metazoa</taxon>
        <taxon>Chordata</taxon>
        <taxon>Craniata</taxon>
        <taxon>Vertebrata</taxon>
        <taxon>Euteleostomi</taxon>
        <taxon>Lepidosauria</taxon>
        <taxon>Squamata</taxon>
        <taxon>Bifurcata</taxon>
        <taxon>Unidentata</taxon>
        <taxon>Episquamata</taxon>
        <taxon>Toxicofera</taxon>
        <taxon>Serpentes</taxon>
        <taxon>Colubroidea</taxon>
        <taxon>Elapidae</taxon>
        <taxon>Bungarinae</taxon>
        <taxon>Bungarus</taxon>
    </lineage>
</organism>
<proteinExistence type="evidence at transcript level"/>
<accession>Q8QFW3</accession>
<evidence type="ECO:0000250" key="1"/>
<evidence type="ECO:0000250" key="2">
    <source>
        <dbReference type="UniProtKB" id="P00617"/>
    </source>
</evidence>
<evidence type="ECO:0000250" key="3">
    <source>
        <dbReference type="UniProtKB" id="P14418"/>
    </source>
</evidence>
<evidence type="ECO:0000255" key="4"/>
<evidence type="ECO:0000255" key="5">
    <source>
        <dbReference type="PROSITE-ProRule" id="PRU10035"/>
    </source>
</evidence>
<evidence type="ECO:0000255" key="6">
    <source>
        <dbReference type="PROSITE-ProRule" id="PRU10036"/>
    </source>
</evidence>
<evidence type="ECO:0000305" key="7"/>
<evidence type="ECO:0000305" key="8">
    <source ref="1"/>
</evidence>
<name>PA2B2_BUNCE</name>
<dbReference type="EC" id="3.1.1.4"/>
<dbReference type="EMBL" id="AY081147">
    <property type="protein sequence ID" value="AAL87004.1"/>
    <property type="molecule type" value="mRNA"/>
</dbReference>
<dbReference type="SMR" id="Q8QFW3"/>
<dbReference type="GO" id="GO:0005576">
    <property type="term" value="C:extracellular region"/>
    <property type="evidence" value="ECO:0007669"/>
    <property type="project" value="UniProtKB-SubCell"/>
</dbReference>
<dbReference type="GO" id="GO:0005509">
    <property type="term" value="F:calcium ion binding"/>
    <property type="evidence" value="ECO:0007669"/>
    <property type="project" value="InterPro"/>
</dbReference>
<dbReference type="GO" id="GO:0047498">
    <property type="term" value="F:calcium-dependent phospholipase A2 activity"/>
    <property type="evidence" value="ECO:0007669"/>
    <property type="project" value="TreeGrafter"/>
</dbReference>
<dbReference type="GO" id="GO:0005543">
    <property type="term" value="F:phospholipid binding"/>
    <property type="evidence" value="ECO:0007669"/>
    <property type="project" value="TreeGrafter"/>
</dbReference>
<dbReference type="GO" id="GO:0090729">
    <property type="term" value="F:toxin activity"/>
    <property type="evidence" value="ECO:0007669"/>
    <property type="project" value="UniProtKB-KW"/>
</dbReference>
<dbReference type="GO" id="GO:0050482">
    <property type="term" value="P:arachidonate secretion"/>
    <property type="evidence" value="ECO:0007669"/>
    <property type="project" value="InterPro"/>
</dbReference>
<dbReference type="GO" id="GO:0016042">
    <property type="term" value="P:lipid catabolic process"/>
    <property type="evidence" value="ECO:0007669"/>
    <property type="project" value="UniProtKB-KW"/>
</dbReference>
<dbReference type="GO" id="GO:0006644">
    <property type="term" value="P:phospholipid metabolic process"/>
    <property type="evidence" value="ECO:0007669"/>
    <property type="project" value="InterPro"/>
</dbReference>
<dbReference type="CDD" id="cd00125">
    <property type="entry name" value="PLA2c"/>
    <property type="match status" value="1"/>
</dbReference>
<dbReference type="FunFam" id="1.20.90.10:FF:000007">
    <property type="entry name" value="Acidic phospholipase A2"/>
    <property type="match status" value="1"/>
</dbReference>
<dbReference type="Gene3D" id="1.20.90.10">
    <property type="entry name" value="Phospholipase A2 domain"/>
    <property type="match status" value="1"/>
</dbReference>
<dbReference type="InterPro" id="IPR001211">
    <property type="entry name" value="PLipase_A2"/>
</dbReference>
<dbReference type="InterPro" id="IPR033112">
    <property type="entry name" value="PLipase_A2_Asp_AS"/>
</dbReference>
<dbReference type="InterPro" id="IPR016090">
    <property type="entry name" value="PLipase_A2_dom"/>
</dbReference>
<dbReference type="InterPro" id="IPR036444">
    <property type="entry name" value="PLipase_A2_dom_sf"/>
</dbReference>
<dbReference type="InterPro" id="IPR033113">
    <property type="entry name" value="PLipase_A2_His_AS"/>
</dbReference>
<dbReference type="PANTHER" id="PTHR11716:SF94">
    <property type="entry name" value="PHOSPHOLIPASE A2"/>
    <property type="match status" value="1"/>
</dbReference>
<dbReference type="PANTHER" id="PTHR11716">
    <property type="entry name" value="PHOSPHOLIPASE A2 FAMILY MEMBER"/>
    <property type="match status" value="1"/>
</dbReference>
<dbReference type="Pfam" id="PF00068">
    <property type="entry name" value="Phospholip_A2_1"/>
    <property type="match status" value="1"/>
</dbReference>
<dbReference type="PRINTS" id="PR00389">
    <property type="entry name" value="PHPHLIPASEA2"/>
</dbReference>
<dbReference type="SMART" id="SM00085">
    <property type="entry name" value="PA2c"/>
    <property type="match status" value="1"/>
</dbReference>
<dbReference type="SUPFAM" id="SSF48619">
    <property type="entry name" value="Phospholipase A2, PLA2"/>
    <property type="match status" value="1"/>
</dbReference>
<dbReference type="PROSITE" id="PS00119">
    <property type="entry name" value="PA2_ASP"/>
    <property type="match status" value="1"/>
</dbReference>
<dbReference type="PROSITE" id="PS00118">
    <property type="entry name" value="PA2_HIS"/>
    <property type="match status" value="1"/>
</dbReference>
<feature type="signal peptide" evidence="4">
    <location>
        <begin position="1"/>
        <end position="19"/>
    </location>
</feature>
<feature type="propeptide" id="PRO_0000022825" evidence="2">
    <location>
        <begin position="20"/>
        <end position="27"/>
    </location>
</feature>
<feature type="chain" id="PRO_0000022826" description="Basic phospholipase A2 beta-bungarotoxin A2 chain" evidence="2">
    <location>
        <begin position="28"/>
        <end position="147"/>
    </location>
</feature>
<feature type="active site" evidence="3">
    <location>
        <position position="75"/>
    </location>
</feature>
<feature type="active site" evidence="3">
    <location>
        <position position="121"/>
    </location>
</feature>
<feature type="binding site" evidence="2">
    <location>
        <position position="55"/>
    </location>
    <ligand>
        <name>Ca(2+)</name>
        <dbReference type="ChEBI" id="CHEBI:29108"/>
    </ligand>
</feature>
<feature type="binding site" evidence="2">
    <location>
        <position position="57"/>
    </location>
    <ligand>
        <name>Ca(2+)</name>
        <dbReference type="ChEBI" id="CHEBI:29108"/>
    </ligand>
</feature>
<feature type="binding site" evidence="2">
    <location>
        <position position="59"/>
    </location>
    <ligand>
        <name>Ca(2+)</name>
        <dbReference type="ChEBI" id="CHEBI:29108"/>
    </ligand>
</feature>
<feature type="binding site" evidence="2">
    <location>
        <position position="76"/>
    </location>
    <ligand>
        <name>Ca(2+)</name>
        <dbReference type="ChEBI" id="CHEBI:29108"/>
    </ligand>
</feature>
<feature type="disulfide bond" description="Interchain (with a B chain)" evidence="2">
    <location>
        <position position="42"/>
    </location>
</feature>
<feature type="disulfide bond" evidence="2">
    <location>
        <begin position="54"/>
        <end position="146"/>
    </location>
</feature>
<feature type="disulfide bond" evidence="2">
    <location>
        <begin position="56"/>
        <end position="72"/>
    </location>
</feature>
<feature type="disulfide bond" evidence="2">
    <location>
        <begin position="71"/>
        <end position="127"/>
    </location>
</feature>
<feature type="disulfide bond" evidence="2">
    <location>
        <begin position="78"/>
        <end position="120"/>
    </location>
</feature>
<feature type="disulfide bond" evidence="2">
    <location>
        <begin position="88"/>
        <end position="113"/>
    </location>
</feature>
<feature type="disulfide bond" evidence="2">
    <location>
        <begin position="106"/>
        <end position="118"/>
    </location>
</feature>
<reference key="1">
    <citation type="submission" date="2002-02" db="EMBL/GenBank/DDBJ databases">
        <title>Bungarus caeruleus mRNA for phospholipase A2, beta bungarotoxin A2 chain complete coding region.</title>
        <authorList>
            <person name="Paramasivam M."/>
            <person name="Srinivasan A."/>
            <person name="Singh T.P."/>
        </authorList>
    </citation>
    <scope>NUCLEOTIDE SEQUENCE [MRNA]</scope>
    <source>
        <tissue>Venom gland</tissue>
    </source>
</reference>